<protein>
    <recommendedName>
        <fullName evidence="1">Transcription termination factor FttA</fullName>
        <ecNumber evidence="1 5">3.1.-.-</ecNumber>
    </recommendedName>
    <alternativeName>
        <fullName evidence="4">Ribonuclease aCPSF1</fullName>
    </alternativeName>
</protein>
<dbReference type="EC" id="3.1.-.-" evidence="1 5"/>
<dbReference type="EMBL" id="JYIM01000414">
    <property type="protein sequence ID" value="KKK41266.1"/>
    <property type="molecule type" value="Genomic_DNA"/>
</dbReference>
<dbReference type="SMR" id="A0A0F8XYN9"/>
<dbReference type="KEGG" id="loki:Lokiarch_44440"/>
<dbReference type="PATRIC" id="fig|1538547.4.peg.4657"/>
<dbReference type="Proteomes" id="UP000034722">
    <property type="component" value="Unassembled WGS sequence"/>
</dbReference>
<dbReference type="GO" id="GO:0003677">
    <property type="term" value="F:DNA binding"/>
    <property type="evidence" value="ECO:0007669"/>
    <property type="project" value="UniProtKB-KW"/>
</dbReference>
<dbReference type="GO" id="GO:0004527">
    <property type="term" value="F:exonuclease activity"/>
    <property type="evidence" value="ECO:0007669"/>
    <property type="project" value="UniProtKB-KW"/>
</dbReference>
<dbReference type="GO" id="GO:0046872">
    <property type="term" value="F:metal ion binding"/>
    <property type="evidence" value="ECO:0007669"/>
    <property type="project" value="UniProtKB-KW"/>
</dbReference>
<dbReference type="GO" id="GO:0003723">
    <property type="term" value="F:RNA binding"/>
    <property type="evidence" value="ECO:0007669"/>
    <property type="project" value="UniProtKB-KW"/>
</dbReference>
<dbReference type="GO" id="GO:0004521">
    <property type="term" value="F:RNA endonuclease activity"/>
    <property type="evidence" value="ECO:0007669"/>
    <property type="project" value="TreeGrafter"/>
</dbReference>
<dbReference type="GO" id="GO:0006353">
    <property type="term" value="P:DNA-templated transcription termination"/>
    <property type="evidence" value="ECO:0000316"/>
    <property type="project" value="UniProtKB"/>
</dbReference>
<dbReference type="CDD" id="cd22532">
    <property type="entry name" value="KH-II_CPSF_arch_rpt1"/>
    <property type="match status" value="1"/>
</dbReference>
<dbReference type="CDD" id="cd16295">
    <property type="entry name" value="TTHA0252-CPSF-like_MBL-fold"/>
    <property type="match status" value="1"/>
</dbReference>
<dbReference type="Gene3D" id="3.30.300.20">
    <property type="match status" value="1"/>
</dbReference>
<dbReference type="Gene3D" id="3.30.300.230">
    <property type="match status" value="1"/>
</dbReference>
<dbReference type="Gene3D" id="3.40.50.10890">
    <property type="match status" value="1"/>
</dbReference>
<dbReference type="Gene3D" id="3.60.15.10">
    <property type="entry name" value="Ribonuclease Z/Hydroxyacylglutathione hydrolase-like"/>
    <property type="match status" value="1"/>
</dbReference>
<dbReference type="HAMAP" id="MF_00870">
    <property type="entry name" value="FttA"/>
    <property type="match status" value="1"/>
</dbReference>
<dbReference type="InterPro" id="IPR019975">
    <property type="entry name" value="aCPSF1"/>
</dbReference>
<dbReference type="InterPro" id="IPR022712">
    <property type="entry name" value="Beta_Casp"/>
</dbReference>
<dbReference type="InterPro" id="IPR004087">
    <property type="entry name" value="KH_dom"/>
</dbReference>
<dbReference type="InterPro" id="IPR015946">
    <property type="entry name" value="KH_dom-like_a/b"/>
</dbReference>
<dbReference type="InterPro" id="IPR004044">
    <property type="entry name" value="KH_dom_type_2"/>
</dbReference>
<dbReference type="InterPro" id="IPR050698">
    <property type="entry name" value="MBL"/>
</dbReference>
<dbReference type="InterPro" id="IPR001279">
    <property type="entry name" value="Metallo-B-lactamas"/>
</dbReference>
<dbReference type="InterPro" id="IPR036866">
    <property type="entry name" value="RibonucZ/Hydroxyglut_hydro"/>
</dbReference>
<dbReference type="InterPro" id="IPR011108">
    <property type="entry name" value="RMMBL"/>
</dbReference>
<dbReference type="InterPro" id="IPR033769">
    <property type="entry name" value="TffA_KH"/>
</dbReference>
<dbReference type="NCBIfam" id="TIGR03675">
    <property type="entry name" value="arCOG00543"/>
    <property type="match status" value="1"/>
</dbReference>
<dbReference type="PANTHER" id="PTHR11203:SF51">
    <property type="entry name" value="CLEAVAGE AND POLYADENYLATION SPECIFICITY FACTOR"/>
    <property type="match status" value="1"/>
</dbReference>
<dbReference type="PANTHER" id="PTHR11203">
    <property type="entry name" value="CLEAVAGE AND POLYADENYLATION SPECIFICITY FACTOR FAMILY MEMBER"/>
    <property type="match status" value="1"/>
</dbReference>
<dbReference type="Pfam" id="PF10996">
    <property type="entry name" value="Beta-Casp"/>
    <property type="match status" value="1"/>
</dbReference>
<dbReference type="Pfam" id="PF07650">
    <property type="entry name" value="KH_2"/>
    <property type="match status" value="1"/>
</dbReference>
<dbReference type="Pfam" id="PF17214">
    <property type="entry name" value="KH_TffA"/>
    <property type="match status" value="1"/>
</dbReference>
<dbReference type="Pfam" id="PF16661">
    <property type="entry name" value="Lactamase_B_6"/>
    <property type="match status" value="1"/>
</dbReference>
<dbReference type="Pfam" id="PF07521">
    <property type="entry name" value="RMMBL"/>
    <property type="match status" value="1"/>
</dbReference>
<dbReference type="SMART" id="SM01027">
    <property type="entry name" value="Beta-Casp"/>
    <property type="match status" value="1"/>
</dbReference>
<dbReference type="SMART" id="SM00322">
    <property type="entry name" value="KH"/>
    <property type="match status" value="1"/>
</dbReference>
<dbReference type="SMART" id="SM00849">
    <property type="entry name" value="Lactamase_B"/>
    <property type="match status" value="1"/>
</dbReference>
<dbReference type="SUPFAM" id="SSF56281">
    <property type="entry name" value="Metallo-hydrolase/oxidoreductase"/>
    <property type="match status" value="1"/>
</dbReference>
<dbReference type="PROSITE" id="PS50084">
    <property type="entry name" value="KH_TYPE_1"/>
    <property type="match status" value="1"/>
</dbReference>
<name>FTTA_LOKSG</name>
<organism>
    <name type="scientific">Lokiarchaeum sp. (strain GC14_75)</name>
    <dbReference type="NCBI Taxonomy" id="1538547"/>
    <lineage>
        <taxon>Archaea</taxon>
        <taxon>Promethearchaeati</taxon>
        <taxon>Promethearchaeota</taxon>
        <taxon>Promethearchaeia</taxon>
        <taxon>Promethearchaeales</taxon>
        <taxon>Promethearchaeaceae</taxon>
        <taxon>Candidatus Lokiarchaeum</taxon>
    </lineage>
</organism>
<comment type="function">
    <text evidence="1">Terminates transcription on the whole genome. Termination is linked to FttA-mediated RNA cleavage and does not require NTP hydrolysis. Cleaves endonucleolytically at the RNA exit channel of RNA polymerase (RNAP); the 5'-3' exonuclease activity of this protein degrades the nascent RNA released from RNAP.</text>
</comment>
<comment type="function">
    <text evidence="2 3 5">Terminates transcription genome-wide in M.maripaludis (PubMed:32857850, PubMed:34964713). Restores wild-type growth to a strain of Methanococcus maripaludis depleted for this gene at 22 degrees Celsius and prevents transcriptional read-through (PubMed:32857850). Transcription termination is most effective in vivo on RNAs with more than one U4-tract in their 3'-ends (PubMed:34964713). Has endonuclease activity after U-rich tracts in transcription termination sequences (Probable) (PubMed:32857850).</text>
</comment>
<comment type="cofactor">
    <cofactor evidence="1">
        <name>Zn(2+)</name>
        <dbReference type="ChEBI" id="CHEBI:29105"/>
    </cofactor>
    <text evidence="1">Binds 2 Zn(2+) ions, which are required for nuclease activity.</text>
</comment>
<comment type="subunit">
    <text evidence="1">Homodimer. Interacts with RNA polymerase (RNAP), interacts with the Spt4-Spt5 complex.</text>
</comment>
<comment type="similarity">
    <text evidence="1">Belongs to the metallo-beta-lactamase superfamily. RNA-metabolizing metallo-beta-lactamase-like family. FttA subfamily.</text>
</comment>
<feature type="chain" id="PRO_0000460389" description="Transcription termination factor FttA">
    <location>
        <begin position="1"/>
        <end position="636"/>
    </location>
</feature>
<feature type="region of interest" description="KHa" evidence="1">
    <location>
        <begin position="4"/>
        <end position="72"/>
    </location>
</feature>
<feature type="region of interest" description="KHb" evidence="1">
    <location>
        <begin position="73"/>
        <end position="140"/>
    </location>
</feature>
<feature type="region of interest" description="Metallo-beta-lactamase N-terminus" evidence="1">
    <location>
        <begin position="181"/>
        <end position="383"/>
    </location>
</feature>
<feature type="region of interest" description="Beta-Casp" evidence="1">
    <location>
        <begin position="384"/>
        <end position="577"/>
    </location>
</feature>
<feature type="region of interest" description="Metallo-beta-lactamase C-terminus" evidence="1">
    <location>
        <begin position="578"/>
        <end position="636"/>
    </location>
</feature>
<feature type="binding site" evidence="1">
    <location>
        <position position="242"/>
    </location>
    <ligand>
        <name>Zn(2+)</name>
        <dbReference type="ChEBI" id="CHEBI:29105"/>
        <label>1</label>
    </ligand>
</feature>
<feature type="binding site" evidence="1">
    <location>
        <position position="244"/>
    </location>
    <ligand>
        <name>Zn(2+)</name>
        <dbReference type="ChEBI" id="CHEBI:29105"/>
        <label>1</label>
    </ligand>
</feature>
<feature type="binding site" evidence="1">
    <location>
        <position position="246"/>
    </location>
    <ligand>
        <name>Zn(2+)</name>
        <dbReference type="ChEBI" id="CHEBI:29105"/>
        <label>2</label>
    </ligand>
</feature>
<feature type="binding site" evidence="1">
    <location>
        <position position="247"/>
    </location>
    <ligand>
        <name>Zn(2+)</name>
        <dbReference type="ChEBI" id="CHEBI:29105"/>
        <label>2</label>
    </ligand>
</feature>
<feature type="binding site" evidence="1">
    <location>
        <position position="329"/>
    </location>
    <ligand>
        <name>Zn(2+)</name>
        <dbReference type="ChEBI" id="CHEBI:29105"/>
        <label>1</label>
    </ligand>
</feature>
<feature type="binding site" evidence="1">
    <location>
        <position position="352"/>
    </location>
    <ligand>
        <name>Zn(2+)</name>
        <dbReference type="ChEBI" id="CHEBI:29105"/>
        <label>1</label>
    </ligand>
</feature>
<feature type="binding site" evidence="1">
    <location>
        <position position="352"/>
    </location>
    <ligand>
        <name>Zn(2+)</name>
        <dbReference type="ChEBI" id="CHEBI:29105"/>
        <label>2</label>
    </ligand>
</feature>
<feature type="binding site" evidence="1">
    <location>
        <position position="603"/>
    </location>
    <ligand>
        <name>Zn(2+)</name>
        <dbReference type="ChEBI" id="CHEBI:29105"/>
        <label>2</label>
    </ligand>
</feature>
<reference evidence="6" key="1">
    <citation type="journal article" date="2015" name="Nature">
        <title>Complex archaea that bridge the gap between prokaryotes and eukaryotes.</title>
        <authorList>
            <person name="Spang A."/>
            <person name="Saw J.H."/>
            <person name="Jorgensen S.L."/>
            <person name="Zaremba-Niedzwiedzka K."/>
            <person name="Martijn J."/>
            <person name="Lind A.E."/>
            <person name="van Eijk R."/>
            <person name="Schleper C."/>
            <person name="Guy L."/>
            <person name="Ettema T.J."/>
        </authorList>
    </citation>
    <scope>NUCLEOTIDE SEQUENCE [LARGE SCALE GENOMIC DNA]</scope>
    <source>
        <strain>GC14_75</strain>
    </source>
</reference>
<reference key="2">
    <citation type="journal article" date="2020" name="Nucleic Acids Res.">
        <title>The conserved ribonuclease aCPSF1 triggers genome-wide transcription termination of Archaea via a 3'-end cleavage mode.</title>
        <authorList>
            <person name="Yue L."/>
            <person name="Li J."/>
            <person name="Zhang B."/>
            <person name="Qi L."/>
            <person name="Li Z."/>
            <person name="Zhao F."/>
            <person name="Li L."/>
            <person name="Zheng X."/>
            <person name="Dong X."/>
        </authorList>
    </citation>
    <scope>FUNCTION</scope>
    <source>
        <strain>GC14_75</strain>
    </source>
</reference>
<reference key="3">
    <citation type="journal article" date="2021" name="Elife">
        <title>aCPSF1 cooperates with terminator U-tract to dictate archaeal transcription termination efficacy.</title>
        <authorList>
            <person name="Li J."/>
            <person name="Yue L."/>
            <person name="Li Z."/>
            <person name="Zhang W."/>
            <person name="Zhang B."/>
            <person name="Zhao F."/>
            <person name="Dong X."/>
        </authorList>
    </citation>
    <scope>FUNCTION</scope>
    <source>
        <strain>GC14_75</strain>
    </source>
</reference>
<evidence type="ECO:0000255" key="1">
    <source>
        <dbReference type="HAMAP-Rule" id="MF_00870"/>
    </source>
</evidence>
<evidence type="ECO:0000269" key="2">
    <source>
    </source>
</evidence>
<evidence type="ECO:0000269" key="3">
    <source>
    </source>
</evidence>
<evidence type="ECO:0000303" key="4">
    <source>
    </source>
</evidence>
<evidence type="ECO:0000305" key="5">
    <source>
    </source>
</evidence>
<evidence type="ECO:0000312" key="6">
    <source>
        <dbReference type="EMBL" id="KKK41266.1"/>
    </source>
</evidence>
<sequence length="636" mass="71739">MSFELELKRIRDEIVQNLPPEITVTKIEFEGPEIAVYSESEDVAAIETSSTLKDLAKVMRKRVVFRWNVDKRKDPAETKDYIMNLISKDAEIGEITFDHTRGEVIIESGKPGLVIGKKGINLKEIRTNTFWQPKTIRTPPLPSRTIQLIRGMLKKERQTQKDILLEIGKRIHRPALFNNLNIRMNALGGFREVGRSCILMQTRDSNVLLDVGLNVGNPNDRFPYFFVPQFSIRDLDAVIISHSHLDHCGVVPFLYKYGYRGPIYCTLPTRNLSTMLQLDFIQICDKEGTPSPYSKRDVKNAVLHTIPLSWGKVTDIAPDIKLTLHNSGHILGSSMIHLHFGKGDYNFVYTGDFKYQKTRLLEKATVKFPRVEGLLIEATYGGPQDRIPSRQESEKELKQILNSTLKRGGKVLIPVLAVGRAQELLIVLEEYISSGFIDKVPVYIDGLISEATAIHTANPDFLSSDLREKILHQGKNPFLSDFFETVSSQDERADIIGGGPCIILATSGMLIGGPSVHYLKALAEDSKNTLIFVSYQVSGTLGSRIIRGFREFNYIDWKGRTQLVKIGLKVFTLEGFSGHSSRSQISQFLRRIQPRPKVVIVNHGEESKCVSLSTMIHKKLRKSTKSPKNLEVVLLK</sequence>
<proteinExistence type="inferred from homology"/>
<gene>
    <name evidence="1" type="primary">fttA</name>
    <name evidence="6" type="ORF">Lokiarch_44440</name>
</gene>
<keyword id="KW-0238">DNA-binding</keyword>
<keyword id="KW-0255">Endonuclease</keyword>
<keyword id="KW-0269">Exonuclease</keyword>
<keyword id="KW-0378">Hydrolase</keyword>
<keyword id="KW-0479">Metal-binding</keyword>
<keyword id="KW-0540">Nuclease</keyword>
<keyword id="KW-0694">RNA-binding</keyword>
<keyword id="KW-0804">Transcription</keyword>
<keyword id="KW-0805">Transcription regulation</keyword>
<keyword id="KW-0806">Transcription termination</keyword>
<keyword id="KW-0862">Zinc</keyword>
<accession>A0A0F8XYN9</accession>